<sequence length="530" mass="60856">MPGKWISALLLLQISCCFRSVKCGKVLVWPMEFSHWMNIKIILDELVQRGHEVTVLRPSAYYVLDPKKSPGLKFETFPTSVSKDNLENFFIKFVDVWTYEMPRDTCLSYSPLLQNMIDEFSDYFLSLCKDVVSNKELMTKLQESKFDVLLSDPVASCGELIAELLQIPFLYSIRFSPGYQIEKSSGRFLLPPSYVPVILSGLGGQMTFIERIKNMICMLYFDFWFQMFNDKKWDSFYSEYLGRPTTLVETMGQAEMWLIRSNWDLEFPHPTLPNVDYVGGLHCKPAKPLPKDMEEFVQSSGDHGVVVFSLGSMVSNMTEEKANAIAWALAQIPQKVLWKFDGKTPATLGHNTRVYKWLPQNDLLGHPKTKAFVTHGGANGVYEAIYHGIPMIGIPLFGEQHDNIAHMVAKGAAVALNIRTMSKSDVLNALEEVIENPFYKKNAIWLSTIHHDQPMKPLDRAVFWIEFVMRHKRAKHLRPLGHNLTWYQYHSLDVIGFLLSCVATTIVLSVKCLLFIYRFFVKKENKMKNE</sequence>
<organism>
    <name type="scientific">Mus musculus</name>
    <name type="common">Mouse</name>
    <dbReference type="NCBI Taxonomy" id="10090"/>
    <lineage>
        <taxon>Eukaryota</taxon>
        <taxon>Metazoa</taxon>
        <taxon>Chordata</taxon>
        <taxon>Craniata</taxon>
        <taxon>Vertebrata</taxon>
        <taxon>Euteleostomi</taxon>
        <taxon>Mammalia</taxon>
        <taxon>Eutheria</taxon>
        <taxon>Euarchontoglires</taxon>
        <taxon>Glires</taxon>
        <taxon>Rodentia</taxon>
        <taxon>Myomorpha</taxon>
        <taxon>Muroidea</taxon>
        <taxon>Muridae</taxon>
        <taxon>Murinae</taxon>
        <taxon>Mus</taxon>
        <taxon>Mus</taxon>
    </lineage>
</organism>
<keyword id="KW-0256">Endoplasmic reticulum</keyword>
<keyword id="KW-0325">Glycoprotein</keyword>
<keyword id="KW-0328">Glycosyltransferase</keyword>
<keyword id="KW-0443">Lipid metabolism</keyword>
<keyword id="KW-0472">Membrane</keyword>
<keyword id="KW-1185">Reference proteome</keyword>
<keyword id="KW-0732">Signal</keyword>
<keyword id="KW-0753">Steroid metabolism</keyword>
<keyword id="KW-0808">Transferase</keyword>
<keyword id="KW-0812">Transmembrane</keyword>
<keyword id="KW-1133">Transmembrane helix</keyword>
<name>UDB17_MOUSE</name>
<dbReference type="EC" id="2.4.1.17" evidence="2"/>
<dbReference type="EMBL" id="X06358">
    <property type="protein sequence ID" value="CAA29657.1"/>
    <property type="molecule type" value="mRNA"/>
</dbReference>
<dbReference type="CCDS" id="CCDS19385.3"/>
<dbReference type="PIR" id="S00163">
    <property type="entry name" value="S00163"/>
</dbReference>
<dbReference type="SMR" id="P17717"/>
<dbReference type="FunCoup" id="P17717">
    <property type="interactions" value="246"/>
</dbReference>
<dbReference type="STRING" id="10090.ENSMUSP00000068282"/>
<dbReference type="CAZy" id="GT1">
    <property type="family name" value="Glycosyltransferase Family 1"/>
</dbReference>
<dbReference type="GlyCosmos" id="P17717">
    <property type="glycosylation" value="2 sites, No reported glycans"/>
</dbReference>
<dbReference type="GlyGen" id="P17717">
    <property type="glycosylation" value="4 sites, 1 N-linked glycan (1 site), 1 O-linked glycan (2 sites)"/>
</dbReference>
<dbReference type="iPTMnet" id="P17717"/>
<dbReference type="PhosphoSitePlus" id="P17717"/>
<dbReference type="SwissPalm" id="P17717"/>
<dbReference type="jPOST" id="P17717"/>
<dbReference type="PaxDb" id="10090-ENSMUSP00000068282"/>
<dbReference type="PeptideAtlas" id="P17717"/>
<dbReference type="ProteomicsDB" id="297804"/>
<dbReference type="AGR" id="MGI:98900"/>
<dbReference type="MGI" id="MGI:98900">
    <property type="gene designation" value="Ugt2b5"/>
</dbReference>
<dbReference type="eggNOG" id="KOG1192">
    <property type="taxonomic scope" value="Eukaryota"/>
</dbReference>
<dbReference type="InParanoid" id="P17717"/>
<dbReference type="Reactome" id="R-MMU-156588">
    <property type="pathway name" value="Glucuronidation"/>
</dbReference>
<dbReference type="Reactome" id="R-MMU-9749641">
    <property type="pathway name" value="Aspirin ADME"/>
</dbReference>
<dbReference type="Reactome" id="R-MMU-9753281">
    <property type="pathway name" value="Paracetamol ADME"/>
</dbReference>
<dbReference type="Reactome" id="R-MMU-9757110">
    <property type="pathway name" value="Prednisone ADME"/>
</dbReference>
<dbReference type="PRO" id="PR:P17717"/>
<dbReference type="Proteomes" id="UP000000589">
    <property type="component" value="Unplaced"/>
</dbReference>
<dbReference type="RNAct" id="P17717">
    <property type="molecule type" value="protein"/>
</dbReference>
<dbReference type="GO" id="GO:0005789">
    <property type="term" value="C:endoplasmic reticulum membrane"/>
    <property type="evidence" value="ECO:0007669"/>
    <property type="project" value="UniProtKB-SubCell"/>
</dbReference>
<dbReference type="GO" id="GO:0005743">
    <property type="term" value="C:mitochondrial inner membrane"/>
    <property type="evidence" value="ECO:0007005"/>
    <property type="project" value="MGI"/>
</dbReference>
<dbReference type="GO" id="GO:0015020">
    <property type="term" value="F:glucuronosyltransferase activity"/>
    <property type="evidence" value="ECO:0000250"/>
    <property type="project" value="UniProtKB"/>
</dbReference>
<dbReference type="GO" id="GO:0008210">
    <property type="term" value="P:estrogen metabolic process"/>
    <property type="evidence" value="ECO:0000250"/>
    <property type="project" value="UniProtKB"/>
</dbReference>
<dbReference type="CDD" id="cd03784">
    <property type="entry name" value="GT1_Gtf-like"/>
    <property type="match status" value="1"/>
</dbReference>
<dbReference type="FunFam" id="3.40.50.2000:FF:000001">
    <property type="entry name" value="UDP-glucuronosyltransferase"/>
    <property type="match status" value="1"/>
</dbReference>
<dbReference type="FunFam" id="3.40.50.2000:FF:000081">
    <property type="entry name" value="UDP-glucuronosyltransferase 2A2"/>
    <property type="match status" value="1"/>
</dbReference>
<dbReference type="Gene3D" id="3.40.50.2000">
    <property type="entry name" value="Glycogen Phosphorylase B"/>
    <property type="match status" value="2"/>
</dbReference>
<dbReference type="InterPro" id="IPR050271">
    <property type="entry name" value="UDP-glycosyltransferase"/>
</dbReference>
<dbReference type="InterPro" id="IPR002213">
    <property type="entry name" value="UDP_glucos_trans"/>
</dbReference>
<dbReference type="InterPro" id="IPR035595">
    <property type="entry name" value="UDP_glycos_trans_CS"/>
</dbReference>
<dbReference type="PANTHER" id="PTHR48043">
    <property type="entry name" value="EG:EG0003.4 PROTEIN-RELATED"/>
    <property type="match status" value="1"/>
</dbReference>
<dbReference type="PANTHER" id="PTHR48043:SF113">
    <property type="entry name" value="UDP GLUCURONOSYLTRANSFERASE 2 FAMILY, POLYPEPTIDE B38-RELATED"/>
    <property type="match status" value="1"/>
</dbReference>
<dbReference type="Pfam" id="PF00201">
    <property type="entry name" value="UDPGT"/>
    <property type="match status" value="1"/>
</dbReference>
<dbReference type="SUPFAM" id="SSF53756">
    <property type="entry name" value="UDP-Glycosyltransferase/glycogen phosphorylase"/>
    <property type="match status" value="1"/>
</dbReference>
<dbReference type="PROSITE" id="PS00375">
    <property type="entry name" value="UDPGT"/>
    <property type="match status" value="1"/>
</dbReference>
<protein>
    <recommendedName>
        <fullName evidence="4">UDP-glucuronosyltransferase 2B17</fullName>
        <shortName>UGT2B17</shortName>
        <ecNumber evidence="2">2.4.1.17</ecNumber>
    </recommendedName>
    <alternativeName>
        <fullName>M-1</fullName>
    </alternativeName>
    <alternativeName>
        <fullName>UDP-glucuronosyltransferase 2B5</fullName>
        <shortName>UDPGT 2B5</shortName>
    </alternativeName>
</protein>
<comment type="function">
    <text evidence="2">UDP-glucuronosyltransferase (UGT) that catalyzes phase II biotransformation reactions in which lipophilic substrates are conjugated with glucuronic acid to increase the metabolite's water solubility, thereby facilitating excretion into either the urine or bile. Catalyzes the glucuronidation of endogenous steroid hormones such as androgens (epitestosterone, androsterone) and estrogens (estradiol, epiestradiol).</text>
</comment>
<comment type="catalytic activity">
    <reaction evidence="2">
        <text>glucuronate acceptor + UDP-alpha-D-glucuronate = acceptor beta-D-glucuronoside + UDP + H(+)</text>
        <dbReference type="Rhea" id="RHEA:21032"/>
        <dbReference type="ChEBI" id="CHEBI:15378"/>
        <dbReference type="ChEBI" id="CHEBI:58052"/>
        <dbReference type="ChEBI" id="CHEBI:58223"/>
        <dbReference type="ChEBI" id="CHEBI:132367"/>
        <dbReference type="ChEBI" id="CHEBI:132368"/>
        <dbReference type="EC" id="2.4.1.17"/>
    </reaction>
    <physiologicalReaction direction="left-to-right" evidence="2">
        <dbReference type="Rhea" id="RHEA:21033"/>
    </physiologicalReaction>
</comment>
<comment type="catalytic activity">
    <reaction evidence="2">
        <text>17alpha-estradiol + UDP-alpha-D-glucuronate = 17alpha-estradiol 3-O-(beta-D-glucuronate) + UDP + H(+)</text>
        <dbReference type="Rhea" id="RHEA:52868"/>
        <dbReference type="ChEBI" id="CHEBI:15378"/>
        <dbReference type="ChEBI" id="CHEBI:17160"/>
        <dbReference type="ChEBI" id="CHEBI:57529"/>
        <dbReference type="ChEBI" id="CHEBI:58052"/>
        <dbReference type="ChEBI" id="CHEBI:58223"/>
    </reaction>
    <physiologicalReaction direction="left-to-right" evidence="2">
        <dbReference type="Rhea" id="RHEA:52869"/>
    </physiologicalReaction>
</comment>
<comment type="catalytic activity">
    <reaction evidence="2">
        <text>17alpha-estradiol + UDP-alpha-D-glucuronate = 17alpha-estradiol 17-O-(beta-D-glucuronate) + UDP + H(+)</text>
        <dbReference type="Rhea" id="RHEA:52872"/>
        <dbReference type="ChEBI" id="CHEBI:15378"/>
        <dbReference type="ChEBI" id="CHEBI:17160"/>
        <dbReference type="ChEBI" id="CHEBI:58052"/>
        <dbReference type="ChEBI" id="CHEBI:58223"/>
        <dbReference type="ChEBI" id="CHEBI:136642"/>
    </reaction>
    <physiologicalReaction direction="left-to-right" evidence="2">
        <dbReference type="Rhea" id="RHEA:52873"/>
    </physiologicalReaction>
</comment>
<comment type="catalytic activity">
    <reaction evidence="2">
        <text>17beta-estradiol + UDP-alpha-D-glucuronate = 17beta-estradiol 17-O-(beta-D-glucuronate) + UDP + H(+)</text>
        <dbReference type="Rhea" id="RHEA:52464"/>
        <dbReference type="ChEBI" id="CHEBI:15378"/>
        <dbReference type="ChEBI" id="CHEBI:16469"/>
        <dbReference type="ChEBI" id="CHEBI:58052"/>
        <dbReference type="ChEBI" id="CHEBI:58223"/>
        <dbReference type="ChEBI" id="CHEBI:82961"/>
    </reaction>
    <physiologicalReaction direction="left-to-right" evidence="2">
        <dbReference type="Rhea" id="RHEA:52465"/>
    </physiologicalReaction>
</comment>
<comment type="catalytic activity">
    <reaction evidence="2">
        <text>17beta-hydroxy-5alpha-androstan-3-one + UDP-alpha-D-glucuronate = 5alpha-dihydrotestosterone 17-O-(beta-D-glucuronate) + UDP + H(+)</text>
        <dbReference type="Rhea" id="RHEA:53000"/>
        <dbReference type="ChEBI" id="CHEBI:15378"/>
        <dbReference type="ChEBI" id="CHEBI:16330"/>
        <dbReference type="ChEBI" id="CHEBI:58052"/>
        <dbReference type="ChEBI" id="CHEBI:58223"/>
        <dbReference type="ChEBI" id="CHEBI:136914"/>
    </reaction>
    <physiologicalReaction direction="left-to-right" evidence="2">
        <dbReference type="Rhea" id="RHEA:53001"/>
    </physiologicalReaction>
</comment>
<comment type="catalytic activity">
    <reaction evidence="2">
        <text>testosterone + UDP-alpha-D-glucuronate = testosterone 17-O-(beta-D-glucuronate) + UDP + H(+)</text>
        <dbReference type="Rhea" id="RHEA:52456"/>
        <dbReference type="ChEBI" id="CHEBI:15378"/>
        <dbReference type="ChEBI" id="CHEBI:17347"/>
        <dbReference type="ChEBI" id="CHEBI:58052"/>
        <dbReference type="ChEBI" id="CHEBI:58223"/>
        <dbReference type="ChEBI" id="CHEBI:136639"/>
    </reaction>
    <physiologicalReaction direction="left-to-right" evidence="2">
        <dbReference type="Rhea" id="RHEA:52457"/>
    </physiologicalReaction>
</comment>
<comment type="subcellular location">
    <subcellularLocation>
        <location evidence="2">Endoplasmic reticulum membrane</location>
        <topology evidence="3">Single-pass membrane protein</topology>
    </subcellularLocation>
</comment>
<comment type="similarity">
    <text evidence="4">Belongs to the UDP-glycosyltransferase family.</text>
</comment>
<proteinExistence type="evidence at protein level"/>
<reference key="1">
    <citation type="journal article" date="1987" name="Eur. J. Biochem.">
        <title>Mouse UDP glucuronosyltransferase. cDNA and complete amino acid sequence and regulation.</title>
        <authorList>
            <person name="Kimura T."/>
            <person name="Owens I.S."/>
        </authorList>
    </citation>
    <scope>NUCLEOTIDE SEQUENCE [MRNA]</scope>
    <source>
        <strain>C57BL/6N</strain>
        <tissue>Liver</tissue>
    </source>
</reference>
<reference key="2">
    <citation type="journal article" date="2010" name="Cell">
        <title>A tissue-specific atlas of mouse protein phosphorylation and expression.</title>
        <authorList>
            <person name="Huttlin E.L."/>
            <person name="Jedrychowski M.P."/>
            <person name="Elias J.E."/>
            <person name="Goswami T."/>
            <person name="Rad R."/>
            <person name="Beausoleil S.A."/>
            <person name="Villen J."/>
            <person name="Haas W."/>
            <person name="Sowa M.E."/>
            <person name="Gygi S.P."/>
        </authorList>
    </citation>
    <scope>IDENTIFICATION BY MASS SPECTROMETRY [LARGE SCALE ANALYSIS]</scope>
    <source>
        <tissue>Liver</tissue>
    </source>
</reference>
<evidence type="ECO:0000250" key="1"/>
<evidence type="ECO:0000250" key="2">
    <source>
        <dbReference type="UniProtKB" id="O75795"/>
    </source>
</evidence>
<evidence type="ECO:0000255" key="3"/>
<evidence type="ECO:0000305" key="4"/>
<evidence type="ECO:0000312" key="5">
    <source>
        <dbReference type="MGI" id="MGI:98900"/>
    </source>
</evidence>
<gene>
    <name evidence="5" type="primary">Ugt2b17</name>
    <name type="synonym">Ugt2b5</name>
</gene>
<accession>P17717</accession>
<feature type="signal peptide" evidence="1">
    <location>
        <begin position="1"/>
        <end position="23"/>
    </location>
</feature>
<feature type="chain" id="PRO_0000036029" description="UDP-glucuronosyltransferase 2B17">
    <location>
        <begin position="24"/>
        <end position="530"/>
    </location>
</feature>
<feature type="transmembrane region" description="Helical" evidence="3">
    <location>
        <begin position="494"/>
        <end position="510"/>
    </location>
</feature>
<feature type="glycosylation site" description="N-linked (GlcNAc...) asparagine" evidence="3">
    <location>
        <position position="316"/>
    </location>
</feature>
<feature type="glycosylation site" description="N-linked (GlcNAc...) asparagine" evidence="3">
    <location>
        <position position="483"/>
    </location>
</feature>